<evidence type="ECO:0000255" key="1">
    <source>
        <dbReference type="HAMAP-Rule" id="MF_01043"/>
    </source>
</evidence>
<gene>
    <name evidence="1" type="primary">plsY</name>
    <name type="ordered locus">Tgr7_3015</name>
</gene>
<name>PLSY_THISH</name>
<reference key="1">
    <citation type="journal article" date="2011" name="Stand. Genomic Sci.">
        <title>Complete genome sequence of 'Thioalkalivibrio sulfidophilus' HL-EbGr7.</title>
        <authorList>
            <person name="Muyzer G."/>
            <person name="Sorokin D.Y."/>
            <person name="Mavromatis K."/>
            <person name="Lapidus A."/>
            <person name="Clum A."/>
            <person name="Ivanova N."/>
            <person name="Pati A."/>
            <person name="d'Haeseleer P."/>
            <person name="Woyke T."/>
            <person name="Kyrpides N.C."/>
        </authorList>
    </citation>
    <scope>NUCLEOTIDE SEQUENCE [LARGE SCALE GENOMIC DNA]</scope>
    <source>
        <strain>HL-EbGR7</strain>
    </source>
</reference>
<keyword id="KW-0997">Cell inner membrane</keyword>
<keyword id="KW-1003">Cell membrane</keyword>
<keyword id="KW-0444">Lipid biosynthesis</keyword>
<keyword id="KW-0443">Lipid metabolism</keyword>
<keyword id="KW-0472">Membrane</keyword>
<keyword id="KW-0594">Phospholipid biosynthesis</keyword>
<keyword id="KW-1208">Phospholipid metabolism</keyword>
<keyword id="KW-1185">Reference proteome</keyword>
<keyword id="KW-0808">Transferase</keyword>
<keyword id="KW-0812">Transmembrane</keyword>
<keyword id="KW-1133">Transmembrane helix</keyword>
<accession>B8GPT8</accession>
<protein>
    <recommendedName>
        <fullName evidence="1">Glycerol-3-phosphate acyltransferase</fullName>
    </recommendedName>
    <alternativeName>
        <fullName evidence="1">Acyl-PO4 G3P acyltransferase</fullName>
    </alternativeName>
    <alternativeName>
        <fullName evidence="1">Acyl-phosphate--glycerol-3-phosphate acyltransferase</fullName>
    </alternativeName>
    <alternativeName>
        <fullName evidence="1">G3P acyltransferase</fullName>
        <shortName evidence="1">GPAT</shortName>
        <ecNumber evidence="1">2.3.1.275</ecNumber>
    </alternativeName>
    <alternativeName>
        <fullName evidence="1">Lysophosphatidic acid synthase</fullName>
        <shortName evidence="1">LPA synthase</shortName>
    </alternativeName>
</protein>
<sequence length="203" mass="21249">MLLASALVLGAYLLGSVSTAILVCRLAGLPDPRSQGSGNPGATNVLRTGRKGAAIITLLGDLLKGLVPVLVAHALGLEPVWIAAVALAAFLGHLFPVYHGFRGGKGVATALGVILGIQAWVGLAALATWLIVAAISRISSLSALTAATLTPVYMYLLTGERWYVAAGVLLAALIYWRHRANIRRLLRGEEPKIGNKTKNKSEV</sequence>
<proteinExistence type="inferred from homology"/>
<comment type="function">
    <text evidence="1">Catalyzes the transfer of an acyl group from acyl-phosphate (acyl-PO(4)) to glycerol-3-phosphate (G3P) to form lysophosphatidic acid (LPA). This enzyme utilizes acyl-phosphate as fatty acyl donor, but not acyl-CoA or acyl-ACP.</text>
</comment>
<comment type="catalytic activity">
    <reaction evidence="1">
        <text>an acyl phosphate + sn-glycerol 3-phosphate = a 1-acyl-sn-glycero-3-phosphate + phosphate</text>
        <dbReference type="Rhea" id="RHEA:34075"/>
        <dbReference type="ChEBI" id="CHEBI:43474"/>
        <dbReference type="ChEBI" id="CHEBI:57597"/>
        <dbReference type="ChEBI" id="CHEBI:57970"/>
        <dbReference type="ChEBI" id="CHEBI:59918"/>
        <dbReference type="EC" id="2.3.1.275"/>
    </reaction>
</comment>
<comment type="pathway">
    <text evidence="1">Lipid metabolism; phospholipid metabolism.</text>
</comment>
<comment type="subunit">
    <text evidence="1">Probably interacts with PlsX.</text>
</comment>
<comment type="subcellular location">
    <subcellularLocation>
        <location evidence="1">Cell inner membrane</location>
        <topology evidence="1">Multi-pass membrane protein</topology>
    </subcellularLocation>
</comment>
<comment type="similarity">
    <text evidence="1">Belongs to the PlsY family.</text>
</comment>
<dbReference type="EC" id="2.3.1.275" evidence="1"/>
<dbReference type="EMBL" id="CP001339">
    <property type="protein sequence ID" value="ACL74085.1"/>
    <property type="molecule type" value="Genomic_DNA"/>
</dbReference>
<dbReference type="RefSeq" id="WP_012639548.1">
    <property type="nucleotide sequence ID" value="NC_011901.1"/>
</dbReference>
<dbReference type="SMR" id="B8GPT8"/>
<dbReference type="STRING" id="396588.Tgr7_3015"/>
<dbReference type="KEGG" id="tgr:Tgr7_3015"/>
<dbReference type="eggNOG" id="COG0344">
    <property type="taxonomic scope" value="Bacteria"/>
</dbReference>
<dbReference type="HOGENOM" id="CLU_081254_0_0_6"/>
<dbReference type="OrthoDB" id="9777124at2"/>
<dbReference type="UniPathway" id="UPA00085"/>
<dbReference type="Proteomes" id="UP000002383">
    <property type="component" value="Chromosome"/>
</dbReference>
<dbReference type="GO" id="GO:0005886">
    <property type="term" value="C:plasma membrane"/>
    <property type="evidence" value="ECO:0007669"/>
    <property type="project" value="UniProtKB-SubCell"/>
</dbReference>
<dbReference type="GO" id="GO:0043772">
    <property type="term" value="F:acyl-phosphate glycerol-3-phosphate acyltransferase activity"/>
    <property type="evidence" value="ECO:0007669"/>
    <property type="project" value="UniProtKB-UniRule"/>
</dbReference>
<dbReference type="GO" id="GO:0008654">
    <property type="term" value="P:phospholipid biosynthetic process"/>
    <property type="evidence" value="ECO:0007669"/>
    <property type="project" value="UniProtKB-UniRule"/>
</dbReference>
<dbReference type="HAMAP" id="MF_01043">
    <property type="entry name" value="PlsY"/>
    <property type="match status" value="1"/>
</dbReference>
<dbReference type="InterPro" id="IPR003811">
    <property type="entry name" value="G3P_acylTferase_PlsY"/>
</dbReference>
<dbReference type="NCBIfam" id="TIGR00023">
    <property type="entry name" value="glycerol-3-phosphate 1-O-acyltransferase PlsY"/>
    <property type="match status" value="1"/>
</dbReference>
<dbReference type="PANTHER" id="PTHR30309:SF0">
    <property type="entry name" value="GLYCEROL-3-PHOSPHATE ACYLTRANSFERASE-RELATED"/>
    <property type="match status" value="1"/>
</dbReference>
<dbReference type="PANTHER" id="PTHR30309">
    <property type="entry name" value="INNER MEMBRANE PROTEIN YGIH"/>
    <property type="match status" value="1"/>
</dbReference>
<dbReference type="Pfam" id="PF02660">
    <property type="entry name" value="G3P_acyltransf"/>
    <property type="match status" value="1"/>
</dbReference>
<dbReference type="SMART" id="SM01207">
    <property type="entry name" value="G3P_acyltransf"/>
    <property type="match status" value="1"/>
</dbReference>
<feature type="chain" id="PRO_1000149589" description="Glycerol-3-phosphate acyltransferase">
    <location>
        <begin position="1"/>
        <end position="203"/>
    </location>
</feature>
<feature type="transmembrane region" description="Helical" evidence="1">
    <location>
        <begin position="3"/>
        <end position="23"/>
    </location>
</feature>
<feature type="transmembrane region" description="Helical" evidence="1">
    <location>
        <begin position="75"/>
        <end position="95"/>
    </location>
</feature>
<feature type="transmembrane region" description="Helical" evidence="1">
    <location>
        <begin position="113"/>
        <end position="133"/>
    </location>
</feature>
<feature type="transmembrane region" description="Helical" evidence="1">
    <location>
        <begin position="156"/>
        <end position="176"/>
    </location>
</feature>
<organism>
    <name type="scientific">Thioalkalivibrio sulfidiphilus (strain HL-EbGR7)</name>
    <dbReference type="NCBI Taxonomy" id="396588"/>
    <lineage>
        <taxon>Bacteria</taxon>
        <taxon>Pseudomonadati</taxon>
        <taxon>Pseudomonadota</taxon>
        <taxon>Gammaproteobacteria</taxon>
        <taxon>Chromatiales</taxon>
        <taxon>Ectothiorhodospiraceae</taxon>
        <taxon>Thioalkalivibrio</taxon>
    </lineage>
</organism>